<feature type="chain" id="PRO_0000117422" description="NADH-ubiquinone oxidoreductase chain 1">
    <location>
        <begin position="1"/>
        <end position="318"/>
    </location>
</feature>
<feature type="transmembrane region" description="Helical" evidence="2">
    <location>
        <begin position="2"/>
        <end position="22"/>
    </location>
</feature>
<feature type="transmembrane region" description="Helical" evidence="2">
    <location>
        <begin position="68"/>
        <end position="88"/>
    </location>
</feature>
<feature type="transmembrane region" description="Helical" evidence="2">
    <location>
        <begin position="100"/>
        <end position="120"/>
    </location>
</feature>
<feature type="transmembrane region" description="Helical" evidence="2">
    <location>
        <begin position="147"/>
        <end position="167"/>
    </location>
</feature>
<feature type="transmembrane region" description="Helical" evidence="2">
    <location>
        <begin position="171"/>
        <end position="191"/>
    </location>
</feature>
<feature type="transmembrane region" description="Helical" evidence="2">
    <location>
        <begin position="217"/>
        <end position="237"/>
    </location>
</feature>
<feature type="transmembrane region" description="Helical" evidence="2">
    <location>
        <begin position="254"/>
        <end position="273"/>
    </location>
</feature>
<feature type="transmembrane region" description="Helical" evidence="2">
    <location>
        <begin position="294"/>
        <end position="314"/>
    </location>
</feature>
<evidence type="ECO:0000250" key="1"/>
<evidence type="ECO:0000255" key="2"/>
<evidence type="ECO:0000305" key="3"/>
<protein>
    <recommendedName>
        <fullName>NADH-ubiquinone oxidoreductase chain 1</fullName>
        <ecNumber>7.1.1.2</ecNumber>
    </recommendedName>
    <alternativeName>
        <fullName>NADH dehydrogenase subunit 1</fullName>
    </alternativeName>
</protein>
<geneLocation type="mitochondrion"/>
<comment type="function">
    <text evidence="1">Core subunit of the mitochondrial membrane respiratory chain NADH dehydrogenase (Complex I) that is believed to belong to the minimal assembly required for catalysis. Complex I functions in the transfer of electrons from NADH to the respiratory chain. The immediate electron acceptor for the enzyme is believed to be ubiquinone (By similarity).</text>
</comment>
<comment type="catalytic activity">
    <reaction>
        <text>a ubiquinone + NADH + 5 H(+)(in) = a ubiquinol + NAD(+) + 4 H(+)(out)</text>
        <dbReference type="Rhea" id="RHEA:29091"/>
        <dbReference type="Rhea" id="RHEA-COMP:9565"/>
        <dbReference type="Rhea" id="RHEA-COMP:9566"/>
        <dbReference type="ChEBI" id="CHEBI:15378"/>
        <dbReference type="ChEBI" id="CHEBI:16389"/>
        <dbReference type="ChEBI" id="CHEBI:17976"/>
        <dbReference type="ChEBI" id="CHEBI:57540"/>
        <dbReference type="ChEBI" id="CHEBI:57945"/>
        <dbReference type="EC" id="7.1.1.2"/>
    </reaction>
</comment>
<comment type="subcellular location">
    <subcellularLocation>
        <location evidence="1">Mitochondrion inner membrane</location>
        <topology evidence="1">Multi-pass membrane protein</topology>
    </subcellularLocation>
</comment>
<comment type="similarity">
    <text evidence="3">Belongs to the complex I subunit 1 family.</text>
</comment>
<organism>
    <name type="scientific">Hsunycteris thomasi</name>
    <name type="common">Thomas's nectar bat</name>
    <name type="synonym">Lonchophylla thomasi</name>
    <dbReference type="NCBI Taxonomy" id="138705"/>
    <lineage>
        <taxon>Eukaryota</taxon>
        <taxon>Metazoa</taxon>
        <taxon>Chordata</taxon>
        <taxon>Craniata</taxon>
        <taxon>Vertebrata</taxon>
        <taxon>Euteleostomi</taxon>
        <taxon>Mammalia</taxon>
        <taxon>Eutheria</taxon>
        <taxon>Laurasiatheria</taxon>
        <taxon>Chiroptera</taxon>
        <taxon>Yangochiroptera</taxon>
        <taxon>Phyllostomidae</taxon>
        <taxon>Lonchophyllinae</taxon>
        <taxon>Hsunycteris</taxon>
    </lineage>
</organism>
<proteinExistence type="inferred from homology"/>
<gene>
    <name type="primary">MT-ND1</name>
    <name type="synonym">MTND1</name>
    <name type="synonym">NADH1</name>
    <name type="synonym">ND1</name>
</gene>
<sequence>MFMLNLLTMIVPVLLAVAFLTLVERKILGYMQLRKGPNVVGPHGLLQPIADAVKLFTKEPLRPLTSSITMFIMAPILALTLALTMWIPLPMPHPLLNMNLGVLFMLAMSSLAVYALLWSGWASNSKYALIGALRAVAQTISYEVTLAIILLSTLLMSGSYSLSTLIITQEYIWLILPSWPLTMMWFISTLAETNRAPFDLTEGESELVSGFNVEYAGGPFALFFLAEYANIIMMNALTTTLFLGAWNNPTTPELYTTNFAMKTLLLTMSFLWIRASYPRFRYDQLMHLLWKNFLPLTLALCMWYVTMPIMMAGIPPQT</sequence>
<name>NU1M_HSUTH</name>
<reference key="1">
    <citation type="journal article" date="2002" name="J. Mol. Evol.">
        <title>Intra- and interfamily relationships of Vespertilionidae inferred by various molecular markers including SINE insertion data.</title>
        <authorList>
            <person name="Kawai K."/>
            <person name="Nikaido M."/>
            <person name="Harada M."/>
            <person name="Matsumura S."/>
            <person name="Lin L.K."/>
            <person name="Wu Y."/>
            <person name="Hasegawa M."/>
            <person name="Okada N."/>
        </authorList>
    </citation>
    <scope>NUCLEOTIDE SEQUENCE [GENOMIC DNA]</scope>
</reference>
<keyword id="KW-0249">Electron transport</keyword>
<keyword id="KW-0472">Membrane</keyword>
<keyword id="KW-0496">Mitochondrion</keyword>
<keyword id="KW-0999">Mitochondrion inner membrane</keyword>
<keyword id="KW-0520">NAD</keyword>
<keyword id="KW-0679">Respiratory chain</keyword>
<keyword id="KW-1278">Translocase</keyword>
<keyword id="KW-0812">Transmembrane</keyword>
<keyword id="KW-1133">Transmembrane helix</keyword>
<keyword id="KW-0813">Transport</keyword>
<keyword id="KW-0830">Ubiquinone</keyword>
<accession>Q8M891</accession>
<dbReference type="EC" id="7.1.1.2"/>
<dbReference type="EMBL" id="AB079810">
    <property type="protein sequence ID" value="BAB92035.1"/>
    <property type="molecule type" value="Genomic_DNA"/>
</dbReference>
<dbReference type="SMR" id="Q8M891"/>
<dbReference type="GO" id="GO:0005743">
    <property type="term" value="C:mitochondrial inner membrane"/>
    <property type="evidence" value="ECO:0007669"/>
    <property type="project" value="UniProtKB-SubCell"/>
</dbReference>
<dbReference type="GO" id="GO:0008137">
    <property type="term" value="F:NADH dehydrogenase (ubiquinone) activity"/>
    <property type="evidence" value="ECO:0007669"/>
    <property type="project" value="UniProtKB-EC"/>
</dbReference>
<dbReference type="GO" id="GO:0009060">
    <property type="term" value="P:aerobic respiration"/>
    <property type="evidence" value="ECO:0007669"/>
    <property type="project" value="TreeGrafter"/>
</dbReference>
<dbReference type="HAMAP" id="MF_01350">
    <property type="entry name" value="NDH1_NuoH"/>
    <property type="match status" value="1"/>
</dbReference>
<dbReference type="InterPro" id="IPR001694">
    <property type="entry name" value="NADH_UbQ_OxRdtase_su1/FPO"/>
</dbReference>
<dbReference type="InterPro" id="IPR018086">
    <property type="entry name" value="NADH_UbQ_OxRdtase_su1_CS"/>
</dbReference>
<dbReference type="PANTHER" id="PTHR11432">
    <property type="entry name" value="NADH DEHYDROGENASE SUBUNIT 1"/>
    <property type="match status" value="1"/>
</dbReference>
<dbReference type="PANTHER" id="PTHR11432:SF3">
    <property type="entry name" value="NADH-UBIQUINONE OXIDOREDUCTASE CHAIN 1"/>
    <property type="match status" value="1"/>
</dbReference>
<dbReference type="Pfam" id="PF00146">
    <property type="entry name" value="NADHdh"/>
    <property type="match status" value="1"/>
</dbReference>
<dbReference type="PROSITE" id="PS00667">
    <property type="entry name" value="COMPLEX1_ND1_1"/>
    <property type="match status" value="1"/>
</dbReference>
<dbReference type="PROSITE" id="PS00668">
    <property type="entry name" value="COMPLEX1_ND1_2"/>
    <property type="match status" value="1"/>
</dbReference>